<feature type="transit peptide" description="Mitochondrion" evidence="1">
    <location>
        <begin position="1"/>
        <end position="42"/>
    </location>
</feature>
<feature type="chain" id="PRO_0000010429" description="Glycerol-3-phosphate dehydrogenase, mitochondrial">
    <location>
        <begin position="43"/>
        <end position="727"/>
    </location>
</feature>
<feature type="domain" description="EF-hand 1" evidence="4">
    <location>
        <begin position="623"/>
        <end position="658"/>
    </location>
</feature>
<feature type="domain" description="EF-hand 2" evidence="4">
    <location>
        <begin position="659"/>
        <end position="694"/>
    </location>
</feature>
<feature type="binding site" evidence="3">
    <location>
        <begin position="71"/>
        <end position="99"/>
    </location>
    <ligand>
        <name>FAD</name>
        <dbReference type="ChEBI" id="CHEBI:57692"/>
    </ligand>
</feature>
<feature type="binding site" evidence="4">
    <location>
        <position position="672"/>
    </location>
    <ligand>
        <name>Ca(2+)</name>
        <dbReference type="ChEBI" id="CHEBI:29108"/>
    </ligand>
</feature>
<feature type="binding site" evidence="4">
    <location>
        <position position="674"/>
    </location>
    <ligand>
        <name>Ca(2+)</name>
        <dbReference type="ChEBI" id="CHEBI:29108"/>
    </ligand>
</feature>
<feature type="binding site" evidence="4">
    <location>
        <position position="676"/>
    </location>
    <ligand>
        <name>Ca(2+)</name>
        <dbReference type="ChEBI" id="CHEBI:29108"/>
    </ligand>
</feature>
<feature type="binding site" evidence="4">
    <location>
        <position position="678"/>
    </location>
    <ligand>
        <name>Ca(2+)</name>
        <dbReference type="ChEBI" id="CHEBI:29108"/>
    </ligand>
</feature>
<feature type="binding site" evidence="4">
    <location>
        <position position="683"/>
    </location>
    <ligand>
        <name>Ca(2+)</name>
        <dbReference type="ChEBI" id="CHEBI:29108"/>
    </ligand>
</feature>
<feature type="modified residue" description="Phosphotyrosine" evidence="2">
    <location>
        <position position="601"/>
    </location>
</feature>
<feature type="splice variant" id="VSP_017134" description="In isoform 2." evidence="14 16">
    <location>
        <begin position="1"/>
        <end position="126"/>
    </location>
</feature>
<feature type="sequence variant" id="VAR_049113" description="In dbSNP:rs2116665." evidence="5 6 7 8 10 11 12 13">
    <original>R</original>
    <variation>H</variation>
    <location>
        <position position="264"/>
    </location>
</feature>
<feature type="sequence variant" id="VAR_049114" description="In dbSNP:rs35096779.">
    <original>K</original>
    <variation>Q</variation>
    <location>
        <position position="453"/>
    </location>
</feature>
<feature type="sequence variant" id="VAR_025215" description="In dbSNP:rs1051916." evidence="6 11">
    <original>R</original>
    <variation>H</variation>
    <location>
        <position position="525"/>
    </location>
</feature>
<feature type="sequence variant" id="VAR_083484" description="Found in patients with type 2 diabetes; uncertain significance." evidence="9">
    <original>F</original>
    <variation>S</variation>
    <location>
        <position position="635"/>
    </location>
</feature>
<feature type="sequence variant" id="VAR_083485" description="Found in patients with type 2 diabetes; uncertain significance." evidence="9">
    <original>Q</original>
    <variation>P</variation>
    <location>
        <position position="649"/>
    </location>
</feature>
<feature type="sequence variant" id="VAR_083486" description="Found in patients with type 2 diabetes; uncertain significance." evidence="9">
    <original>R</original>
    <variation>C</variation>
    <location>
        <position position="650"/>
    </location>
</feature>
<gene>
    <name evidence="19" type="primary">GPD2</name>
</gene>
<accession>P43304</accession>
<accession>A8K4V0</accession>
<accession>B3KSA9</accession>
<accession>Q59FR1</accession>
<accession>Q9HAP9</accession>
<name>GPDM_HUMAN</name>
<keyword id="KW-0025">Alternative splicing</keyword>
<keyword id="KW-0106">Calcium</keyword>
<keyword id="KW-0903">Direct protein sequencing</keyword>
<keyword id="KW-0274">FAD</keyword>
<keyword id="KW-0285">Flavoprotein</keyword>
<keyword id="KW-0479">Metal-binding</keyword>
<keyword id="KW-0496">Mitochondrion</keyword>
<keyword id="KW-0560">Oxidoreductase</keyword>
<keyword id="KW-0597">Phosphoprotein</keyword>
<keyword id="KW-1267">Proteomics identification</keyword>
<keyword id="KW-1185">Reference proteome</keyword>
<keyword id="KW-0677">Repeat</keyword>
<keyword id="KW-0809">Transit peptide</keyword>
<evidence type="ECO:0000250" key="1"/>
<evidence type="ECO:0000250" key="2">
    <source>
        <dbReference type="UniProtKB" id="Q64521"/>
    </source>
</evidence>
<evidence type="ECO:0000255" key="3"/>
<evidence type="ECO:0000255" key="4">
    <source>
        <dbReference type="PROSITE-ProRule" id="PRU00448"/>
    </source>
</evidence>
<evidence type="ECO:0000269" key="5">
    <source>
    </source>
</evidence>
<evidence type="ECO:0000269" key="6">
    <source>
    </source>
</evidence>
<evidence type="ECO:0000269" key="7">
    <source>
    </source>
</evidence>
<evidence type="ECO:0000269" key="8">
    <source>
    </source>
</evidence>
<evidence type="ECO:0000269" key="9">
    <source>
    </source>
</evidence>
<evidence type="ECO:0000269" key="10">
    <source>
    </source>
</evidence>
<evidence type="ECO:0000269" key="11">
    <source ref="4"/>
</evidence>
<evidence type="ECO:0000269" key="12">
    <source ref="6"/>
</evidence>
<evidence type="ECO:0000269" key="13">
    <source ref="8"/>
</evidence>
<evidence type="ECO:0000303" key="14">
    <source>
    </source>
</evidence>
<evidence type="ECO:0000303" key="15">
    <source>
    </source>
</evidence>
<evidence type="ECO:0000303" key="16">
    <source ref="4"/>
</evidence>
<evidence type="ECO:0000305" key="17"/>
<evidence type="ECO:0000305" key="18">
    <source>
    </source>
</evidence>
<evidence type="ECO:0000312" key="19">
    <source>
        <dbReference type="HGNC" id="HGNC:4456"/>
    </source>
</evidence>
<dbReference type="EC" id="1.1.5.3" evidence="9"/>
<dbReference type="EMBL" id="U12424">
    <property type="protein sequence ID" value="AAA65701.1"/>
    <property type="molecule type" value="mRNA"/>
</dbReference>
<dbReference type="EMBL" id="U36310">
    <property type="protein sequence ID" value="AAB60403.1"/>
    <property type="molecule type" value="mRNA"/>
</dbReference>
<dbReference type="EMBL" id="U40367">
    <property type="protein sequence ID" value="AAC50556.1"/>
    <property type="molecule type" value="Genomic_DNA"/>
</dbReference>
<dbReference type="EMBL" id="U40353">
    <property type="protein sequence ID" value="AAC50556.1"/>
    <property type="status" value="JOINED"/>
    <property type="molecule type" value="Genomic_DNA"/>
</dbReference>
<dbReference type="EMBL" id="U40354">
    <property type="protein sequence ID" value="AAC50556.1"/>
    <property type="status" value="JOINED"/>
    <property type="molecule type" value="Genomic_DNA"/>
</dbReference>
<dbReference type="EMBL" id="U40355">
    <property type="protein sequence ID" value="AAC50556.1"/>
    <property type="status" value="JOINED"/>
    <property type="molecule type" value="Genomic_DNA"/>
</dbReference>
<dbReference type="EMBL" id="U40357">
    <property type="protein sequence ID" value="AAC50556.1"/>
    <property type="status" value="JOINED"/>
    <property type="molecule type" value="Genomic_DNA"/>
</dbReference>
<dbReference type="EMBL" id="U40358">
    <property type="protein sequence ID" value="AAC50556.1"/>
    <property type="status" value="JOINED"/>
    <property type="molecule type" value="Genomic_DNA"/>
</dbReference>
<dbReference type="EMBL" id="U40359">
    <property type="protein sequence ID" value="AAC50556.1"/>
    <property type="status" value="JOINED"/>
    <property type="molecule type" value="Genomic_DNA"/>
</dbReference>
<dbReference type="EMBL" id="U40360">
    <property type="protein sequence ID" value="AAC50556.1"/>
    <property type="status" value="JOINED"/>
    <property type="molecule type" value="Genomic_DNA"/>
</dbReference>
<dbReference type="EMBL" id="U40361">
    <property type="protein sequence ID" value="AAC50556.1"/>
    <property type="status" value="JOINED"/>
    <property type="molecule type" value="Genomic_DNA"/>
</dbReference>
<dbReference type="EMBL" id="U40362">
    <property type="protein sequence ID" value="AAC50556.1"/>
    <property type="status" value="JOINED"/>
    <property type="molecule type" value="Genomic_DNA"/>
</dbReference>
<dbReference type="EMBL" id="U40363">
    <property type="protein sequence ID" value="AAC50556.1"/>
    <property type="status" value="JOINED"/>
    <property type="molecule type" value="Genomic_DNA"/>
</dbReference>
<dbReference type="EMBL" id="U40364">
    <property type="protein sequence ID" value="AAC50556.1"/>
    <property type="status" value="JOINED"/>
    <property type="molecule type" value="Genomic_DNA"/>
</dbReference>
<dbReference type="EMBL" id="U40365">
    <property type="protein sequence ID" value="AAC50556.1"/>
    <property type="status" value="JOINED"/>
    <property type="molecule type" value="Genomic_DNA"/>
</dbReference>
<dbReference type="EMBL" id="AF311325">
    <property type="protein sequence ID" value="AAG33851.1"/>
    <property type="molecule type" value="mRNA"/>
</dbReference>
<dbReference type="EMBL" id="AK093198">
    <property type="protein sequence ID" value="BAG52671.1"/>
    <property type="molecule type" value="mRNA"/>
</dbReference>
<dbReference type="EMBL" id="AK291065">
    <property type="protein sequence ID" value="BAF83754.1"/>
    <property type="molecule type" value="mRNA"/>
</dbReference>
<dbReference type="EMBL" id="AK292817">
    <property type="protein sequence ID" value="BAF85506.1"/>
    <property type="molecule type" value="mRNA"/>
</dbReference>
<dbReference type="EMBL" id="AB209399">
    <property type="protein sequence ID" value="BAD92636.1"/>
    <property type="status" value="ALT_INIT"/>
    <property type="molecule type" value="mRNA"/>
</dbReference>
<dbReference type="EMBL" id="AC011308">
    <property type="status" value="NOT_ANNOTATED_CDS"/>
    <property type="molecule type" value="Genomic_DNA"/>
</dbReference>
<dbReference type="EMBL" id="AC092686">
    <property type="status" value="NOT_ANNOTATED_CDS"/>
    <property type="molecule type" value="Genomic_DNA"/>
</dbReference>
<dbReference type="EMBL" id="CH471058">
    <property type="protein sequence ID" value="EAX11453.1"/>
    <property type="molecule type" value="Genomic_DNA"/>
</dbReference>
<dbReference type="EMBL" id="U79250">
    <property type="protein sequence ID" value="AAB50200.1"/>
    <property type="molecule type" value="mRNA"/>
</dbReference>
<dbReference type="CCDS" id="CCDS2202.1">
    <molecule id="P43304-1"/>
</dbReference>
<dbReference type="PIR" id="G02093">
    <property type="entry name" value="G02093"/>
</dbReference>
<dbReference type="RefSeq" id="NP_000399.3">
    <molecule id="P43304-1"/>
    <property type="nucleotide sequence ID" value="NM_000408.5"/>
</dbReference>
<dbReference type="RefSeq" id="NP_001076581.2">
    <molecule id="P43304-1"/>
    <property type="nucleotide sequence ID" value="NM_001083112.3"/>
</dbReference>
<dbReference type="RefSeq" id="XP_005246526.1">
    <molecule id="P43304-1"/>
    <property type="nucleotide sequence ID" value="XM_005246469.3"/>
</dbReference>
<dbReference type="RefSeq" id="XP_011509279.1">
    <molecule id="P43304-1"/>
    <property type="nucleotide sequence ID" value="XM_011510977.3"/>
</dbReference>
<dbReference type="RefSeq" id="XP_016859319.1">
    <molecule id="P43304-1"/>
    <property type="nucleotide sequence ID" value="XM_017003830.2"/>
</dbReference>
<dbReference type="RefSeq" id="XP_024308566.1">
    <molecule id="P43304-1"/>
    <property type="nucleotide sequence ID" value="XM_024452798.2"/>
</dbReference>
<dbReference type="RefSeq" id="XP_047299919.1">
    <molecule id="P43304-1"/>
    <property type="nucleotide sequence ID" value="XM_047443963.1"/>
</dbReference>
<dbReference type="RefSeq" id="XP_047299920.1">
    <molecule id="P43304-1"/>
    <property type="nucleotide sequence ID" value="XM_047443964.1"/>
</dbReference>
<dbReference type="RefSeq" id="XP_054197387.1">
    <molecule id="P43304-1"/>
    <property type="nucleotide sequence ID" value="XM_054341412.1"/>
</dbReference>
<dbReference type="RefSeq" id="XP_054197388.1">
    <molecule id="P43304-1"/>
    <property type="nucleotide sequence ID" value="XM_054341413.1"/>
</dbReference>
<dbReference type="RefSeq" id="XP_054197389.1">
    <molecule id="P43304-1"/>
    <property type="nucleotide sequence ID" value="XM_054341414.1"/>
</dbReference>
<dbReference type="RefSeq" id="XP_054197390.1">
    <molecule id="P43304-1"/>
    <property type="nucleotide sequence ID" value="XM_054341415.1"/>
</dbReference>
<dbReference type="RefSeq" id="XP_054197391.1">
    <molecule id="P43304-1"/>
    <property type="nucleotide sequence ID" value="XM_054341416.1"/>
</dbReference>
<dbReference type="RefSeq" id="XP_054197392.1">
    <molecule id="P43304-1"/>
    <property type="nucleotide sequence ID" value="XM_054341417.1"/>
</dbReference>
<dbReference type="SMR" id="P43304"/>
<dbReference type="BioGRID" id="109081">
    <property type="interactions" value="102"/>
</dbReference>
<dbReference type="FunCoup" id="P43304">
    <property type="interactions" value="1714"/>
</dbReference>
<dbReference type="IntAct" id="P43304">
    <property type="interactions" value="48"/>
</dbReference>
<dbReference type="MINT" id="P43304"/>
<dbReference type="STRING" id="9606.ENSP00000308610"/>
<dbReference type="ChEMBL" id="CHEMBL3391681"/>
<dbReference type="SwissLipids" id="SLP:000000147"/>
<dbReference type="GlyCosmos" id="P43304">
    <property type="glycosylation" value="2 sites, 1 glycan"/>
</dbReference>
<dbReference type="GlyGen" id="P43304">
    <property type="glycosylation" value="2 sites, 1 O-linked glycan (2 sites)"/>
</dbReference>
<dbReference type="iPTMnet" id="P43304"/>
<dbReference type="PhosphoSitePlus" id="P43304"/>
<dbReference type="SwissPalm" id="P43304"/>
<dbReference type="BioMuta" id="GPD2"/>
<dbReference type="DMDM" id="229462943"/>
<dbReference type="REPRODUCTION-2DPAGE" id="IPI00017895"/>
<dbReference type="jPOST" id="P43304"/>
<dbReference type="MassIVE" id="P43304"/>
<dbReference type="PaxDb" id="9606-ENSP00000308610"/>
<dbReference type="PeptideAtlas" id="P43304"/>
<dbReference type="ProteomicsDB" id="55607">
    <molecule id="P43304-1"/>
</dbReference>
<dbReference type="ProteomicsDB" id="55608">
    <molecule id="P43304-2"/>
</dbReference>
<dbReference type="Pumba" id="P43304"/>
<dbReference type="Antibodypedia" id="2370">
    <property type="antibodies" value="279 antibodies from 30 providers"/>
</dbReference>
<dbReference type="DNASU" id="2820"/>
<dbReference type="Ensembl" id="ENST00000310454.10">
    <molecule id="P43304-1"/>
    <property type="protein sequence ID" value="ENSP00000308610.5"/>
    <property type="gene ID" value="ENSG00000115159.17"/>
</dbReference>
<dbReference type="Ensembl" id="ENST00000409674.5">
    <molecule id="P43304-1"/>
    <property type="protein sequence ID" value="ENSP00000386425.1"/>
    <property type="gene ID" value="ENSG00000115159.17"/>
</dbReference>
<dbReference type="Ensembl" id="ENST00000409861.5">
    <molecule id="P43304-1"/>
    <property type="protein sequence ID" value="ENSP00000386626.1"/>
    <property type="gene ID" value="ENSG00000115159.17"/>
</dbReference>
<dbReference type="Ensembl" id="ENST00000438166.7">
    <molecule id="P43304-1"/>
    <property type="protein sequence ID" value="ENSP00000409708.2"/>
    <property type="gene ID" value="ENSG00000115159.17"/>
</dbReference>
<dbReference type="GeneID" id="2820"/>
<dbReference type="KEGG" id="hsa:2820"/>
<dbReference type="MANE-Select" id="ENST00000438166.7">
    <property type="protein sequence ID" value="ENSP00000409708.2"/>
    <property type="RefSeq nucleotide sequence ID" value="NM_000408.5"/>
    <property type="RefSeq protein sequence ID" value="NP_000399.3"/>
</dbReference>
<dbReference type="UCSC" id="uc002tzd.5">
    <molecule id="P43304-1"/>
    <property type="organism name" value="human"/>
</dbReference>
<dbReference type="AGR" id="HGNC:4456"/>
<dbReference type="CTD" id="2820"/>
<dbReference type="DisGeNET" id="2820"/>
<dbReference type="GeneCards" id="GPD2"/>
<dbReference type="HGNC" id="HGNC:4456">
    <property type="gene designation" value="GPD2"/>
</dbReference>
<dbReference type="HPA" id="ENSG00000115159">
    <property type="expression patterns" value="Low tissue specificity"/>
</dbReference>
<dbReference type="MalaCards" id="GPD2"/>
<dbReference type="MIM" id="138430">
    <property type="type" value="gene"/>
</dbReference>
<dbReference type="neXtProt" id="NX_P43304"/>
<dbReference type="OpenTargets" id="ENSG00000115159"/>
<dbReference type="PharmGKB" id="PA28837"/>
<dbReference type="VEuPathDB" id="HostDB:ENSG00000115159"/>
<dbReference type="eggNOG" id="KOG0042">
    <property type="taxonomic scope" value="Eukaryota"/>
</dbReference>
<dbReference type="GeneTree" id="ENSGT00390000001718"/>
<dbReference type="HOGENOM" id="CLU_015740_3_1_1"/>
<dbReference type="InParanoid" id="P43304"/>
<dbReference type="OMA" id="PHIVKPM"/>
<dbReference type="OrthoDB" id="264015at2759"/>
<dbReference type="PAN-GO" id="P43304">
    <property type="GO annotations" value="1 GO annotation based on evolutionary models"/>
</dbReference>
<dbReference type="PhylomeDB" id="P43304"/>
<dbReference type="TreeFam" id="TF300359"/>
<dbReference type="BioCyc" id="MetaCyc:HS03841-MONOMER"/>
<dbReference type="BRENDA" id="1.1.5.3">
    <property type="organism ID" value="2681"/>
</dbReference>
<dbReference type="PathwayCommons" id="P43304"/>
<dbReference type="Reactome" id="R-HSA-1483166">
    <property type="pathway name" value="Synthesis of PA"/>
</dbReference>
<dbReference type="Reactome" id="R-HSA-163560">
    <property type="pathway name" value="Triglyceride catabolism"/>
</dbReference>
<dbReference type="SignaLink" id="P43304"/>
<dbReference type="UniPathway" id="UPA00618">
    <property type="reaction ID" value="UER00673"/>
</dbReference>
<dbReference type="BioGRID-ORCS" id="2820">
    <property type="hits" value="10 hits in 1165 CRISPR screens"/>
</dbReference>
<dbReference type="CD-CODE" id="91857CE7">
    <property type="entry name" value="Nucleolus"/>
</dbReference>
<dbReference type="CD-CODE" id="DEE660B4">
    <property type="entry name" value="Stress granule"/>
</dbReference>
<dbReference type="CD-CODE" id="FB4E32DD">
    <property type="entry name" value="Presynaptic clusters and postsynaptic densities"/>
</dbReference>
<dbReference type="ChiTaRS" id="GPD2">
    <property type="organism name" value="human"/>
</dbReference>
<dbReference type="GenomeRNAi" id="2820"/>
<dbReference type="Pharos" id="P43304">
    <property type="development level" value="Tbio"/>
</dbReference>
<dbReference type="PRO" id="PR:P43304"/>
<dbReference type="Proteomes" id="UP000005640">
    <property type="component" value="Chromosome 2"/>
</dbReference>
<dbReference type="RNAct" id="P43304">
    <property type="molecule type" value="protein"/>
</dbReference>
<dbReference type="Bgee" id="ENSG00000115159">
    <property type="expression patterns" value="Expressed in secondary oocyte and 187 other cell types or tissues"/>
</dbReference>
<dbReference type="ExpressionAtlas" id="P43304">
    <property type="expression patterns" value="baseline and differential"/>
</dbReference>
<dbReference type="GO" id="GO:0005743">
    <property type="term" value="C:mitochondrial inner membrane"/>
    <property type="evidence" value="ECO:0000304"/>
    <property type="project" value="Reactome"/>
</dbReference>
<dbReference type="GO" id="GO:0005739">
    <property type="term" value="C:mitochondrion"/>
    <property type="evidence" value="ECO:0000314"/>
    <property type="project" value="HPA"/>
</dbReference>
<dbReference type="GO" id="GO:0005509">
    <property type="term" value="F:calcium ion binding"/>
    <property type="evidence" value="ECO:0007669"/>
    <property type="project" value="InterPro"/>
</dbReference>
<dbReference type="GO" id="GO:0004368">
    <property type="term" value="F:glycerol-3-phosphate dehydrogenase (quinone) activity"/>
    <property type="evidence" value="ECO:0000314"/>
    <property type="project" value="UniProtKB"/>
</dbReference>
<dbReference type="GO" id="GO:0043010">
    <property type="term" value="P:camera-type eye development"/>
    <property type="evidence" value="ECO:0007669"/>
    <property type="project" value="Ensembl"/>
</dbReference>
<dbReference type="GO" id="GO:0006094">
    <property type="term" value="P:gluconeogenesis"/>
    <property type="evidence" value="ECO:0007669"/>
    <property type="project" value="Ensembl"/>
</dbReference>
<dbReference type="GO" id="GO:0019563">
    <property type="term" value="P:glycerol catabolic process"/>
    <property type="evidence" value="ECO:0007669"/>
    <property type="project" value="UniProtKB-UniPathway"/>
</dbReference>
<dbReference type="GO" id="GO:0006072">
    <property type="term" value="P:glycerol-3-phosphate metabolic process"/>
    <property type="evidence" value="ECO:0000318"/>
    <property type="project" value="GO_Central"/>
</dbReference>
<dbReference type="GO" id="GO:0006127">
    <property type="term" value="P:glycerol-3-phosphate shuttle"/>
    <property type="evidence" value="ECO:0000318"/>
    <property type="project" value="GO_Central"/>
</dbReference>
<dbReference type="GO" id="GO:0035264">
    <property type="term" value="P:multicellular organism growth"/>
    <property type="evidence" value="ECO:0007669"/>
    <property type="project" value="Ensembl"/>
</dbReference>
<dbReference type="CDD" id="cd00051">
    <property type="entry name" value="EFh"/>
    <property type="match status" value="1"/>
</dbReference>
<dbReference type="FunFam" id="1.10.238.10:FF:000155">
    <property type="entry name" value="Glycerol-3-phosphate dehydrogenase"/>
    <property type="match status" value="1"/>
</dbReference>
<dbReference type="FunFam" id="1.10.8.870:FF:000001">
    <property type="entry name" value="Glycerol-3-phosphate dehydrogenase"/>
    <property type="match status" value="1"/>
</dbReference>
<dbReference type="FunFam" id="3.30.9.10:FF:000037">
    <property type="entry name" value="Glycerol-3-phosphate dehydrogenase"/>
    <property type="match status" value="1"/>
</dbReference>
<dbReference type="FunFam" id="3.50.50.60:FF:000449">
    <property type="entry name" value="Glycerol-3-phosphate dehydrogenase, mitochondrial"/>
    <property type="match status" value="1"/>
</dbReference>
<dbReference type="Gene3D" id="1.10.8.870">
    <property type="entry name" value="Alpha-glycerophosphate oxidase, cap domain"/>
    <property type="match status" value="1"/>
</dbReference>
<dbReference type="Gene3D" id="3.30.9.10">
    <property type="entry name" value="D-Amino Acid Oxidase, subunit A, domain 2"/>
    <property type="match status" value="1"/>
</dbReference>
<dbReference type="Gene3D" id="1.10.238.10">
    <property type="entry name" value="EF-hand"/>
    <property type="match status" value="1"/>
</dbReference>
<dbReference type="Gene3D" id="3.50.50.60">
    <property type="entry name" value="FAD/NAD(P)-binding domain"/>
    <property type="match status" value="1"/>
</dbReference>
<dbReference type="InterPro" id="IPR031656">
    <property type="entry name" value="DAO_C"/>
</dbReference>
<dbReference type="InterPro" id="IPR038299">
    <property type="entry name" value="DAO_C_sf"/>
</dbReference>
<dbReference type="InterPro" id="IPR011992">
    <property type="entry name" value="EF-hand-dom_pair"/>
</dbReference>
<dbReference type="InterPro" id="IPR018247">
    <property type="entry name" value="EF_Hand_1_Ca_BS"/>
</dbReference>
<dbReference type="InterPro" id="IPR002048">
    <property type="entry name" value="EF_hand_dom"/>
</dbReference>
<dbReference type="InterPro" id="IPR006076">
    <property type="entry name" value="FAD-dep_OxRdtase"/>
</dbReference>
<dbReference type="InterPro" id="IPR036188">
    <property type="entry name" value="FAD/NAD-bd_sf"/>
</dbReference>
<dbReference type="InterPro" id="IPR000447">
    <property type="entry name" value="G3P_DH_FAD-dep"/>
</dbReference>
<dbReference type="PANTHER" id="PTHR11985">
    <property type="entry name" value="GLYCEROL-3-PHOSPHATE DEHYDROGENASE"/>
    <property type="match status" value="1"/>
</dbReference>
<dbReference type="PANTHER" id="PTHR11985:SF15">
    <property type="entry name" value="GLYCEROL-3-PHOSPHATE DEHYDROGENASE, MITOCHONDRIAL"/>
    <property type="match status" value="1"/>
</dbReference>
<dbReference type="Pfam" id="PF01266">
    <property type="entry name" value="DAO"/>
    <property type="match status" value="1"/>
</dbReference>
<dbReference type="Pfam" id="PF16901">
    <property type="entry name" value="DAO_C"/>
    <property type="match status" value="1"/>
</dbReference>
<dbReference type="Pfam" id="PF13499">
    <property type="entry name" value="EF-hand_7"/>
    <property type="match status" value="1"/>
</dbReference>
<dbReference type="PRINTS" id="PR01001">
    <property type="entry name" value="FADG3PDH"/>
</dbReference>
<dbReference type="SMART" id="SM00054">
    <property type="entry name" value="EFh"/>
    <property type="match status" value="2"/>
</dbReference>
<dbReference type="SUPFAM" id="SSF47473">
    <property type="entry name" value="EF-hand"/>
    <property type="match status" value="1"/>
</dbReference>
<dbReference type="SUPFAM" id="SSF54373">
    <property type="entry name" value="FAD-linked reductases, C-terminal domain"/>
    <property type="match status" value="1"/>
</dbReference>
<dbReference type="SUPFAM" id="SSF51905">
    <property type="entry name" value="FAD/NAD(P)-binding domain"/>
    <property type="match status" value="1"/>
</dbReference>
<dbReference type="PROSITE" id="PS00018">
    <property type="entry name" value="EF_HAND_1"/>
    <property type="match status" value="1"/>
</dbReference>
<dbReference type="PROSITE" id="PS50222">
    <property type="entry name" value="EF_HAND_2"/>
    <property type="match status" value="2"/>
</dbReference>
<dbReference type="PROSITE" id="PS00977">
    <property type="entry name" value="FAD_G3PDH_1"/>
    <property type="match status" value="1"/>
</dbReference>
<dbReference type="PROSITE" id="PS00978">
    <property type="entry name" value="FAD_G3PDH_2"/>
    <property type="match status" value="1"/>
</dbReference>
<reference key="1">
    <citation type="journal article" date="1994" name="Gene">
        <title>The sequence of a human mitochondrial glycerol-3-phosphate dehydrogenase-encoding cDNA.</title>
        <authorList>
            <person name="Lehn D.A."/>
            <person name="Brown L.J."/>
            <person name="Simonson G.D."/>
            <person name="Moran S.M."/>
            <person name="McDonald M.J."/>
        </authorList>
    </citation>
    <scope>NUCLEOTIDE SEQUENCE [MRNA] (ISOFORM 1)</scope>
    <scope>VARIANTS HIS-264 AND HIS-525</scope>
</reference>
<reference key="2">
    <citation type="journal article" date="1996" name="Diabetes">
        <title>Mitochondrial glycerol-3-phosphate dehydrogenase. Cloning of an alternatively spliced human islet-cell cDNA, tissue distribution, physical mapping, and identification of a polymorphic genetic marker.</title>
        <authorList>
            <person name="Ferrer J."/>
            <person name="Aoki M."/>
            <person name="Behn P."/>
            <person name="Nestorowicz A."/>
            <person name="Riggs A."/>
            <person name="Permutt M.A."/>
        </authorList>
    </citation>
    <scope>NUCLEOTIDE SEQUENCE [MRNA] (ISOFORM 1)</scope>
    <scope>VARIANT HIS-264</scope>
</reference>
<reference key="3">
    <citation type="journal article" date="1996" name="Gene">
        <title>Structural organization and mapping of the human mitochondrial glycerol phosphate dehydrogenase-encoding gene and pseudogene.</title>
        <authorList>
            <person name="Brown L.J."/>
            <person name="Stoffel M."/>
            <person name="Moran S.M."/>
            <person name="Fernald A.A."/>
            <person name="Lehn D.A."/>
            <person name="LeBeau M.M."/>
            <person name="MacDonald M.J."/>
        </authorList>
    </citation>
    <scope>NUCLEOTIDE SEQUENCE [GENOMIC DNA]</scope>
    <scope>VARIANT HIS-264</scope>
</reference>
<reference key="4">
    <citation type="submission" date="2000-10" db="EMBL/GenBank/DDBJ databases">
        <title>A novel glycerol-3-phosphate dehydrogenase 3 from adult testis.</title>
        <authorList>
            <person name="Yin L.L."/>
            <person name="Li J.M."/>
            <person name="Sha J.H."/>
        </authorList>
    </citation>
    <scope>NUCLEOTIDE SEQUENCE [MRNA] (ISOFORM 2)</scope>
    <scope>VARIANTS HIS-264 AND HIS-525</scope>
    <source>
        <tissue>Testis</tissue>
    </source>
</reference>
<reference key="5">
    <citation type="journal article" date="2004" name="Nat. Genet.">
        <title>Complete sequencing and characterization of 21,243 full-length human cDNAs.</title>
        <authorList>
            <person name="Ota T."/>
            <person name="Suzuki Y."/>
            <person name="Nishikawa T."/>
            <person name="Otsuki T."/>
            <person name="Sugiyama T."/>
            <person name="Irie R."/>
            <person name="Wakamatsu A."/>
            <person name="Hayashi K."/>
            <person name="Sato H."/>
            <person name="Nagai K."/>
            <person name="Kimura K."/>
            <person name="Makita H."/>
            <person name="Sekine M."/>
            <person name="Obayashi M."/>
            <person name="Nishi T."/>
            <person name="Shibahara T."/>
            <person name="Tanaka T."/>
            <person name="Ishii S."/>
            <person name="Yamamoto J."/>
            <person name="Saito K."/>
            <person name="Kawai Y."/>
            <person name="Isono Y."/>
            <person name="Nakamura Y."/>
            <person name="Nagahari K."/>
            <person name="Murakami K."/>
            <person name="Yasuda T."/>
            <person name="Iwayanagi T."/>
            <person name="Wagatsuma M."/>
            <person name="Shiratori A."/>
            <person name="Sudo H."/>
            <person name="Hosoiri T."/>
            <person name="Kaku Y."/>
            <person name="Kodaira H."/>
            <person name="Kondo H."/>
            <person name="Sugawara M."/>
            <person name="Takahashi M."/>
            <person name="Kanda K."/>
            <person name="Yokoi T."/>
            <person name="Furuya T."/>
            <person name="Kikkawa E."/>
            <person name="Omura Y."/>
            <person name="Abe K."/>
            <person name="Kamihara K."/>
            <person name="Katsuta N."/>
            <person name="Sato K."/>
            <person name="Tanikawa M."/>
            <person name="Yamazaki M."/>
            <person name="Ninomiya K."/>
            <person name="Ishibashi T."/>
            <person name="Yamashita H."/>
            <person name="Murakawa K."/>
            <person name="Fujimori K."/>
            <person name="Tanai H."/>
            <person name="Kimata M."/>
            <person name="Watanabe M."/>
            <person name="Hiraoka S."/>
            <person name="Chiba Y."/>
            <person name="Ishida S."/>
            <person name="Ono Y."/>
            <person name="Takiguchi S."/>
            <person name="Watanabe S."/>
            <person name="Yosida M."/>
            <person name="Hotuta T."/>
            <person name="Kusano J."/>
            <person name="Kanehori K."/>
            <person name="Takahashi-Fujii A."/>
            <person name="Hara H."/>
            <person name="Tanase T.-O."/>
            <person name="Nomura Y."/>
            <person name="Togiya S."/>
            <person name="Komai F."/>
            <person name="Hara R."/>
            <person name="Takeuchi K."/>
            <person name="Arita M."/>
            <person name="Imose N."/>
            <person name="Musashino K."/>
            <person name="Yuuki H."/>
            <person name="Oshima A."/>
            <person name="Sasaki N."/>
            <person name="Aotsuka S."/>
            <person name="Yoshikawa Y."/>
            <person name="Matsunawa H."/>
            <person name="Ichihara T."/>
            <person name="Shiohata N."/>
            <person name="Sano S."/>
            <person name="Moriya S."/>
            <person name="Momiyama H."/>
            <person name="Satoh N."/>
            <person name="Takami S."/>
            <person name="Terashima Y."/>
            <person name="Suzuki O."/>
            <person name="Nakagawa S."/>
            <person name="Senoh A."/>
            <person name="Mizoguchi H."/>
            <person name="Goto Y."/>
            <person name="Shimizu F."/>
            <person name="Wakebe H."/>
            <person name="Hishigaki H."/>
            <person name="Watanabe T."/>
            <person name="Sugiyama A."/>
            <person name="Takemoto M."/>
            <person name="Kawakami B."/>
            <person name="Yamazaki M."/>
            <person name="Watanabe K."/>
            <person name="Kumagai A."/>
            <person name="Itakura S."/>
            <person name="Fukuzumi Y."/>
            <person name="Fujimori Y."/>
            <person name="Komiyama M."/>
            <person name="Tashiro H."/>
            <person name="Tanigami A."/>
            <person name="Fujiwara T."/>
            <person name="Ono T."/>
            <person name="Yamada K."/>
            <person name="Fujii Y."/>
            <person name="Ozaki K."/>
            <person name="Hirao M."/>
            <person name="Ohmori Y."/>
            <person name="Kawabata A."/>
            <person name="Hikiji T."/>
            <person name="Kobatake N."/>
            <person name="Inagaki H."/>
            <person name="Ikema Y."/>
            <person name="Okamoto S."/>
            <person name="Okitani R."/>
            <person name="Kawakami T."/>
            <person name="Noguchi S."/>
            <person name="Itoh T."/>
            <person name="Shigeta K."/>
            <person name="Senba T."/>
            <person name="Matsumura K."/>
            <person name="Nakajima Y."/>
            <person name="Mizuno T."/>
            <person name="Morinaga M."/>
            <person name="Sasaki M."/>
            <person name="Togashi T."/>
            <person name="Oyama M."/>
            <person name="Hata H."/>
            <person name="Watanabe M."/>
            <person name="Komatsu T."/>
            <person name="Mizushima-Sugano J."/>
            <person name="Satoh T."/>
            <person name="Shirai Y."/>
            <person name="Takahashi Y."/>
            <person name="Nakagawa K."/>
            <person name="Okumura K."/>
            <person name="Nagase T."/>
            <person name="Nomura N."/>
            <person name="Kikuchi H."/>
            <person name="Masuho Y."/>
            <person name="Yamashita R."/>
            <person name="Nakai K."/>
            <person name="Yada T."/>
            <person name="Nakamura Y."/>
            <person name="Ohara O."/>
            <person name="Isogai T."/>
            <person name="Sugano S."/>
        </authorList>
    </citation>
    <scope>NUCLEOTIDE SEQUENCE [LARGE SCALE MRNA] (ISOFORMS 1 AND 2)</scope>
    <scope>VARIANT HIS-264</scope>
    <source>
        <tissue>Testis</tissue>
        <tissue>Trachea</tissue>
    </source>
</reference>
<reference key="6">
    <citation type="submission" date="2005-03" db="EMBL/GenBank/DDBJ databases">
        <authorList>
            <person name="Totoki Y."/>
            <person name="Toyoda A."/>
            <person name="Takeda T."/>
            <person name="Sakaki Y."/>
            <person name="Tanaka A."/>
            <person name="Yokoyama S."/>
            <person name="Ohara O."/>
            <person name="Nagase T."/>
            <person name="Kikuno R.F."/>
        </authorList>
    </citation>
    <scope>NUCLEOTIDE SEQUENCE [LARGE SCALE MRNA] (ISOFORM 1)</scope>
    <scope>VARIANT HIS-264</scope>
    <source>
        <tissue>Brain</tissue>
    </source>
</reference>
<reference key="7">
    <citation type="journal article" date="2005" name="Nature">
        <title>Generation and annotation of the DNA sequences of human chromosomes 2 and 4.</title>
        <authorList>
            <person name="Hillier L.W."/>
            <person name="Graves T.A."/>
            <person name="Fulton R.S."/>
            <person name="Fulton L.A."/>
            <person name="Pepin K.H."/>
            <person name="Minx P."/>
            <person name="Wagner-McPherson C."/>
            <person name="Layman D."/>
            <person name="Wylie K."/>
            <person name="Sekhon M."/>
            <person name="Becker M.C."/>
            <person name="Fewell G.A."/>
            <person name="Delehaunty K.D."/>
            <person name="Miner T.L."/>
            <person name="Nash W.E."/>
            <person name="Kremitzki C."/>
            <person name="Oddy L."/>
            <person name="Du H."/>
            <person name="Sun H."/>
            <person name="Bradshaw-Cordum H."/>
            <person name="Ali J."/>
            <person name="Carter J."/>
            <person name="Cordes M."/>
            <person name="Harris A."/>
            <person name="Isak A."/>
            <person name="van Brunt A."/>
            <person name="Nguyen C."/>
            <person name="Du F."/>
            <person name="Courtney L."/>
            <person name="Kalicki J."/>
            <person name="Ozersky P."/>
            <person name="Abbott S."/>
            <person name="Armstrong J."/>
            <person name="Belter E.A."/>
            <person name="Caruso L."/>
            <person name="Cedroni M."/>
            <person name="Cotton M."/>
            <person name="Davidson T."/>
            <person name="Desai A."/>
            <person name="Elliott G."/>
            <person name="Erb T."/>
            <person name="Fronick C."/>
            <person name="Gaige T."/>
            <person name="Haakenson W."/>
            <person name="Haglund K."/>
            <person name="Holmes A."/>
            <person name="Harkins R."/>
            <person name="Kim K."/>
            <person name="Kruchowski S.S."/>
            <person name="Strong C.M."/>
            <person name="Grewal N."/>
            <person name="Goyea E."/>
            <person name="Hou S."/>
            <person name="Levy A."/>
            <person name="Martinka S."/>
            <person name="Mead K."/>
            <person name="McLellan M.D."/>
            <person name="Meyer R."/>
            <person name="Randall-Maher J."/>
            <person name="Tomlinson C."/>
            <person name="Dauphin-Kohlberg S."/>
            <person name="Kozlowicz-Reilly A."/>
            <person name="Shah N."/>
            <person name="Swearengen-Shahid S."/>
            <person name="Snider J."/>
            <person name="Strong J.T."/>
            <person name="Thompson J."/>
            <person name="Yoakum M."/>
            <person name="Leonard S."/>
            <person name="Pearman C."/>
            <person name="Trani L."/>
            <person name="Radionenko M."/>
            <person name="Waligorski J.E."/>
            <person name="Wang C."/>
            <person name="Rock S.M."/>
            <person name="Tin-Wollam A.-M."/>
            <person name="Maupin R."/>
            <person name="Latreille P."/>
            <person name="Wendl M.C."/>
            <person name="Yang S.-P."/>
            <person name="Pohl C."/>
            <person name="Wallis J.W."/>
            <person name="Spieth J."/>
            <person name="Bieri T.A."/>
            <person name="Berkowicz N."/>
            <person name="Nelson J.O."/>
            <person name="Osborne J."/>
            <person name="Ding L."/>
            <person name="Meyer R."/>
            <person name="Sabo A."/>
            <person name="Shotland Y."/>
            <person name="Sinha P."/>
            <person name="Wohldmann P.E."/>
            <person name="Cook L.L."/>
            <person name="Hickenbotham M.T."/>
            <person name="Eldred J."/>
            <person name="Williams D."/>
            <person name="Jones T.A."/>
            <person name="She X."/>
            <person name="Ciccarelli F.D."/>
            <person name="Izaurralde E."/>
            <person name="Taylor J."/>
            <person name="Schmutz J."/>
            <person name="Myers R.M."/>
            <person name="Cox D.R."/>
            <person name="Huang X."/>
            <person name="McPherson J.D."/>
            <person name="Mardis E.R."/>
            <person name="Clifton S.W."/>
            <person name="Warren W.C."/>
            <person name="Chinwalla A.T."/>
            <person name="Eddy S.R."/>
            <person name="Marra M.A."/>
            <person name="Ovcharenko I."/>
            <person name="Furey T.S."/>
            <person name="Miller W."/>
            <person name="Eichler E.E."/>
            <person name="Bork P."/>
            <person name="Suyama M."/>
            <person name="Torrents D."/>
            <person name="Waterston R.H."/>
            <person name="Wilson R.K."/>
        </authorList>
    </citation>
    <scope>NUCLEOTIDE SEQUENCE [LARGE SCALE GENOMIC DNA]</scope>
</reference>
<reference key="8">
    <citation type="submission" date="2005-09" db="EMBL/GenBank/DDBJ databases">
        <authorList>
            <person name="Mural R.J."/>
            <person name="Istrail S."/>
            <person name="Sutton G.G."/>
            <person name="Florea L."/>
            <person name="Halpern A.L."/>
            <person name="Mobarry C.M."/>
            <person name="Lippert R."/>
            <person name="Walenz B."/>
            <person name="Shatkay H."/>
            <person name="Dew I."/>
            <person name="Miller J.R."/>
            <person name="Flanigan M.J."/>
            <person name="Edwards N.J."/>
            <person name="Bolanos R."/>
            <person name="Fasulo D."/>
            <person name="Halldorsson B.V."/>
            <person name="Hannenhalli S."/>
            <person name="Turner R."/>
            <person name="Yooseph S."/>
            <person name="Lu F."/>
            <person name="Nusskern D.R."/>
            <person name="Shue B.C."/>
            <person name="Zheng X.H."/>
            <person name="Zhong F."/>
            <person name="Delcher A.L."/>
            <person name="Huson D.H."/>
            <person name="Kravitz S.A."/>
            <person name="Mouchard L."/>
            <person name="Reinert K."/>
            <person name="Remington K.A."/>
            <person name="Clark A.G."/>
            <person name="Waterman M.S."/>
            <person name="Eichler E.E."/>
            <person name="Adams M.D."/>
            <person name="Hunkapiller M.W."/>
            <person name="Myers E.W."/>
            <person name="Venter J.C."/>
        </authorList>
    </citation>
    <scope>NUCLEOTIDE SEQUENCE [LARGE SCALE GENOMIC DNA]</scope>
    <scope>VARIANT HIS-264</scope>
</reference>
<reference key="9">
    <citation type="journal article" date="1997" name="Genome Res.">
        <title>Large-scale concatenation cDNA sequencing.</title>
        <authorList>
            <person name="Yu W."/>
            <person name="Andersson B."/>
            <person name="Worley K.C."/>
            <person name="Muzny D.M."/>
            <person name="Ding Y."/>
            <person name="Liu W."/>
            <person name="Ricafrente J.Y."/>
            <person name="Wentland M.A."/>
            <person name="Lennon G."/>
            <person name="Gibbs R.A."/>
        </authorList>
    </citation>
    <scope>NUCLEOTIDE SEQUENCE [LARGE SCALE MRNA] OF 1-408</scope>
    <scope>VARIANT HIS-264</scope>
    <source>
        <tissue>Brain</tissue>
    </source>
</reference>
<reference key="10">
    <citation type="submission" date="2007-03" db="UniProtKB">
        <authorList>
            <person name="Lubec G."/>
            <person name="Afjehi-Sadat L."/>
        </authorList>
    </citation>
    <scope>PROTEIN SEQUENCE OF 212-227 AND 558-572</scope>
    <scope>IDENTIFICATION BY MASS SPECTROMETRY</scope>
    <source>
        <tissue>Brain</tissue>
        <tissue>Cajal-Retzius cell</tissue>
    </source>
</reference>
<reference key="11">
    <citation type="submission" date="2006-01" db="UniProtKB">
        <authorList>
            <person name="Bienvenut W.V."/>
            <person name="Claeys D."/>
        </authorList>
    </citation>
    <scope>PROTEIN SEQUENCE OF 340-348; 410-418; 526-538; 558-572 AND 715-722</scope>
    <scope>IDENTIFICATION BY MASS SPECTROMETRY</scope>
    <source>
        <tissue>Platelet</tissue>
    </source>
</reference>
<reference key="12">
    <citation type="journal article" date="2011" name="BMC Syst. Biol.">
        <title>Initial characterization of the human central proteome.</title>
        <authorList>
            <person name="Burkard T.R."/>
            <person name="Planyavsky M."/>
            <person name="Kaupe I."/>
            <person name="Breitwieser F.P."/>
            <person name="Buerckstuemmer T."/>
            <person name="Bennett K.L."/>
            <person name="Superti-Furga G."/>
            <person name="Colinge J."/>
        </authorList>
    </citation>
    <scope>IDENTIFICATION BY MASS SPECTROMETRY [LARGE SCALE ANALYSIS]</scope>
</reference>
<reference key="13">
    <citation type="journal article" date="2015" name="Proteomics">
        <title>N-terminome analysis of the human mitochondrial proteome.</title>
        <authorList>
            <person name="Vaca Jacome A.S."/>
            <person name="Rabilloud T."/>
            <person name="Schaeffer-Reiss C."/>
            <person name="Rompais M."/>
            <person name="Ayoub D."/>
            <person name="Lane L."/>
            <person name="Bairoch A."/>
            <person name="Van Dorsselaer A."/>
            <person name="Carapito C."/>
        </authorList>
    </citation>
    <scope>IDENTIFICATION BY MASS SPECTROMETRY [LARGE SCALE ANALYSIS]</scope>
</reference>
<reference key="14">
    <citation type="journal article" date="1997" name="Biochem. Biophys. Res. Commun.">
        <title>Mutation in the calcium-binding domain of the mitochondrial glycerophosphate dehydrogenase gene in a family of diabetic subjects.</title>
        <authorList>
            <person name="Novials A."/>
            <person name="Vidal J."/>
            <person name="Franco C."/>
            <person name="Ribera F."/>
            <person name="Sener A."/>
            <person name="Malaisse W.J."/>
            <person name="Gomis R."/>
        </authorList>
    </citation>
    <scope>VARIANTS SER-635; PRO-649 AND CYS-650</scope>
    <scope>FUNCTION</scope>
    <scope>CATALYTIC ACTIVITY</scope>
    <scope>ACTIVITY REGULATION</scope>
</reference>
<comment type="function">
    <text evidence="9">Calcium-responsive mitochondrial glycerol-3-phosphate dehydrogenase which seems to be a key component of the pancreatic beta-cell glucose-sensing device.</text>
</comment>
<comment type="catalytic activity">
    <reaction evidence="9">
        <text>a quinone + sn-glycerol 3-phosphate = dihydroxyacetone phosphate + a quinol</text>
        <dbReference type="Rhea" id="RHEA:18977"/>
        <dbReference type="ChEBI" id="CHEBI:24646"/>
        <dbReference type="ChEBI" id="CHEBI:57597"/>
        <dbReference type="ChEBI" id="CHEBI:57642"/>
        <dbReference type="ChEBI" id="CHEBI:132124"/>
        <dbReference type="EC" id="1.1.5.3"/>
    </reaction>
    <physiologicalReaction direction="left-to-right" evidence="18">
        <dbReference type="Rhea" id="RHEA:18978"/>
    </physiologicalReaction>
</comment>
<comment type="cofactor">
    <cofactor>
        <name>FAD</name>
        <dbReference type="ChEBI" id="CHEBI:57692"/>
    </cofactor>
</comment>
<comment type="activity regulation">
    <text evidence="9">Calcium-binding enhance the activity of the enzyme.</text>
</comment>
<comment type="pathway">
    <text evidence="9">Polyol metabolism; glycerol degradation via glycerol kinase pathway; glycerone phosphate from sn-glycerol 3-phosphate (anaerobic route): step 1/1.</text>
</comment>
<comment type="subcellular location">
    <subcellularLocation>
        <location>Mitochondrion</location>
    </subcellularLocation>
</comment>
<comment type="alternative products">
    <event type="alternative splicing"/>
    <isoform>
        <id>P43304-1</id>
        <name>1</name>
        <sequence type="displayed"/>
    </isoform>
    <isoform>
        <id>P43304-2</id>
        <name>2</name>
        <sequence type="described" ref="VSP_017134"/>
    </isoform>
</comment>
<comment type="similarity">
    <text evidence="17">Belongs to the FAD-dependent glycerol-3-phosphate dehydrogenase family.</text>
</comment>
<comment type="sequence caution" evidence="17">
    <conflict type="erroneous initiation">
        <sequence resource="EMBL-CDS" id="BAD92636"/>
    </conflict>
    <text>Extended N-terminus.</text>
</comment>
<proteinExistence type="evidence at protein level"/>
<protein>
    <recommendedName>
        <fullName evidence="17">Glycerol-3-phosphate dehydrogenase, mitochondrial</fullName>
        <shortName>GPD-M</shortName>
        <shortName>GPDH-M</shortName>
        <ecNumber evidence="9">1.1.5.3</ecNumber>
    </recommendedName>
    <alternativeName>
        <fullName evidence="15">mitohondrial glycerophosphate dehydrogenase gene</fullName>
        <shortName evidence="15">mGDH</shortName>
    </alternativeName>
    <alternativeName>
        <fullName>mtGPD</fullName>
    </alternativeName>
</protein>
<sequence length="727" mass="80853">MAFQKAVKGTILVGGGALATVLGLSQFAHYRRKQMNLAYVKAADCISEPVNREPPSREAQLLTLQNTSEFDILVIGGGATGSGCALDAVTRGLKTALVERDDFSSGTSSRSTKLIHGGVRYLQKAIMKLDIEQYRMVKEALHERANLLEIAPHLSAPLPIMLPVYKWWQLPYYWVGIKLYDLVAGSNCLKSSYVLSKSRALEHFPMLQKDKLVGAIVYYDGQHNDARMNLAIALTAARYGAATANYMEVVSLLKKTDPQTGKVRVSGARCKDVLTGQEFDVRAKCVINATGPFTDSVRKMDDKDAAAICQPSAGVHIVMPGYYSPESMGLLDPATSDGRVIFFLPWQKMTIAGTTDTPTDVTHHPIPSEEDINFILNEVRNYLSCDVEVRRGDVLAAWSGIRPLVTDPKSADTQSISRNHVVDISESGLITIAGGKWTTYRSMAEDTINAAVKTHNLKAGPSRTVGLFLQGGKDWSPTLYIRLVQDYGLESEVAQHLAATYGDKAFEVAKMASVTGKRWPIVGVRLVSEFPYIEAEVKYGIKEYACTAVDMISRRTRLAFLNVQAAEEALPRIVELMGRELNWDDYKKQEQLETARKFLYYEMGYKSRSEQLTDRSEISLLPSDIDRYKKRFHKFDADQKGFITIVDVQRVLESINVQMDENTLHEILNEVDLNKNGQVELNEFLQLMSAIQKGRVSGSRLAILMKTAEENLDRRVPIPVDRSCGGL</sequence>
<organism>
    <name type="scientific">Homo sapiens</name>
    <name type="common">Human</name>
    <dbReference type="NCBI Taxonomy" id="9606"/>
    <lineage>
        <taxon>Eukaryota</taxon>
        <taxon>Metazoa</taxon>
        <taxon>Chordata</taxon>
        <taxon>Craniata</taxon>
        <taxon>Vertebrata</taxon>
        <taxon>Euteleostomi</taxon>
        <taxon>Mammalia</taxon>
        <taxon>Eutheria</taxon>
        <taxon>Euarchontoglires</taxon>
        <taxon>Primates</taxon>
        <taxon>Haplorrhini</taxon>
        <taxon>Catarrhini</taxon>
        <taxon>Hominidae</taxon>
        <taxon>Homo</taxon>
    </lineage>
</organism>